<gene>
    <name evidence="1" type="primary">purT</name>
    <name type="ordered locus">BWG_1663</name>
</gene>
<comment type="function">
    <text evidence="1">Involved in the de novo purine biosynthesis. Catalyzes the transfer of formate to 5-phospho-ribosyl-glycinamide (GAR), producing 5-phospho-ribosyl-N-formylglycinamide (FGAR). Formate is provided by PurU via hydrolysis of 10-formyl-tetrahydrofolate.</text>
</comment>
<comment type="catalytic activity">
    <reaction evidence="1">
        <text>N(1)-(5-phospho-beta-D-ribosyl)glycinamide + formate + ATP = N(2)-formyl-N(1)-(5-phospho-beta-D-ribosyl)glycinamide + ADP + phosphate + H(+)</text>
        <dbReference type="Rhea" id="RHEA:24829"/>
        <dbReference type="ChEBI" id="CHEBI:15378"/>
        <dbReference type="ChEBI" id="CHEBI:15740"/>
        <dbReference type="ChEBI" id="CHEBI:30616"/>
        <dbReference type="ChEBI" id="CHEBI:43474"/>
        <dbReference type="ChEBI" id="CHEBI:143788"/>
        <dbReference type="ChEBI" id="CHEBI:147286"/>
        <dbReference type="ChEBI" id="CHEBI:456216"/>
        <dbReference type="EC" id="6.3.1.21"/>
    </reaction>
    <physiologicalReaction direction="left-to-right" evidence="1">
        <dbReference type="Rhea" id="RHEA:24830"/>
    </physiologicalReaction>
</comment>
<comment type="pathway">
    <text evidence="1">Purine metabolism; IMP biosynthesis via de novo pathway; N(2)-formyl-N(1)-(5-phospho-D-ribosyl)glycinamide from N(1)-(5-phospho-D-ribosyl)glycinamide (formate route): step 1/1.</text>
</comment>
<comment type="subunit">
    <text evidence="1">Homodimer.</text>
</comment>
<comment type="similarity">
    <text evidence="1">Belongs to the PurK/PurT family.</text>
</comment>
<evidence type="ECO:0000255" key="1">
    <source>
        <dbReference type="HAMAP-Rule" id="MF_01643"/>
    </source>
</evidence>
<organism>
    <name type="scientific">Escherichia coli (strain K12 / MC4100 / BW2952)</name>
    <dbReference type="NCBI Taxonomy" id="595496"/>
    <lineage>
        <taxon>Bacteria</taxon>
        <taxon>Pseudomonadati</taxon>
        <taxon>Pseudomonadota</taxon>
        <taxon>Gammaproteobacteria</taxon>
        <taxon>Enterobacterales</taxon>
        <taxon>Enterobacteriaceae</taxon>
        <taxon>Escherichia</taxon>
    </lineage>
</organism>
<feature type="chain" id="PRO_1000215836" description="Formate-dependent phosphoribosylglycinamide formyltransferase">
    <location>
        <begin position="1"/>
        <end position="392"/>
    </location>
</feature>
<feature type="domain" description="ATP-grasp" evidence="1">
    <location>
        <begin position="119"/>
        <end position="308"/>
    </location>
</feature>
<feature type="binding site" evidence="1">
    <location>
        <begin position="22"/>
        <end position="23"/>
    </location>
    <ligand>
        <name>N(1)-(5-phospho-beta-D-ribosyl)glycinamide</name>
        <dbReference type="ChEBI" id="CHEBI:143788"/>
    </ligand>
</feature>
<feature type="binding site" evidence="1">
    <location>
        <position position="82"/>
    </location>
    <ligand>
        <name>N(1)-(5-phospho-beta-D-ribosyl)glycinamide</name>
        <dbReference type="ChEBI" id="CHEBI:143788"/>
    </ligand>
</feature>
<feature type="binding site" evidence="1">
    <location>
        <position position="114"/>
    </location>
    <ligand>
        <name>ATP</name>
        <dbReference type="ChEBI" id="CHEBI:30616"/>
    </ligand>
</feature>
<feature type="binding site" evidence="1">
    <location>
        <position position="155"/>
    </location>
    <ligand>
        <name>ATP</name>
        <dbReference type="ChEBI" id="CHEBI:30616"/>
    </ligand>
</feature>
<feature type="binding site" evidence="1">
    <location>
        <begin position="160"/>
        <end position="165"/>
    </location>
    <ligand>
        <name>ATP</name>
        <dbReference type="ChEBI" id="CHEBI:30616"/>
    </ligand>
</feature>
<feature type="binding site" evidence="1">
    <location>
        <begin position="195"/>
        <end position="198"/>
    </location>
    <ligand>
        <name>ATP</name>
        <dbReference type="ChEBI" id="CHEBI:30616"/>
    </ligand>
</feature>
<feature type="binding site" evidence="1">
    <location>
        <position position="203"/>
    </location>
    <ligand>
        <name>ATP</name>
        <dbReference type="ChEBI" id="CHEBI:30616"/>
    </ligand>
</feature>
<feature type="binding site" evidence="1">
    <location>
        <position position="267"/>
    </location>
    <ligand>
        <name>Mg(2+)</name>
        <dbReference type="ChEBI" id="CHEBI:18420"/>
    </ligand>
</feature>
<feature type="binding site" evidence="1">
    <location>
        <position position="279"/>
    </location>
    <ligand>
        <name>Mg(2+)</name>
        <dbReference type="ChEBI" id="CHEBI:18420"/>
    </ligand>
</feature>
<feature type="binding site" evidence="1">
    <location>
        <position position="286"/>
    </location>
    <ligand>
        <name>N(1)-(5-phospho-beta-D-ribosyl)glycinamide</name>
        <dbReference type="ChEBI" id="CHEBI:143788"/>
    </ligand>
</feature>
<feature type="binding site" evidence="1">
    <location>
        <position position="355"/>
    </location>
    <ligand>
        <name>N(1)-(5-phospho-beta-D-ribosyl)glycinamide</name>
        <dbReference type="ChEBI" id="CHEBI:143788"/>
    </ligand>
</feature>
<feature type="binding site" evidence="1">
    <location>
        <begin position="362"/>
        <end position="363"/>
    </location>
    <ligand>
        <name>N(1)-(5-phospho-beta-D-ribosyl)glycinamide</name>
        <dbReference type="ChEBI" id="CHEBI:143788"/>
    </ligand>
</feature>
<accession>C4ZZK6</accession>
<name>PURT_ECOBW</name>
<keyword id="KW-0067">ATP-binding</keyword>
<keyword id="KW-0436">Ligase</keyword>
<keyword id="KW-0460">Magnesium</keyword>
<keyword id="KW-0479">Metal-binding</keyword>
<keyword id="KW-0547">Nucleotide-binding</keyword>
<keyword id="KW-0658">Purine biosynthesis</keyword>
<protein>
    <recommendedName>
        <fullName evidence="1">Formate-dependent phosphoribosylglycinamide formyltransferase</fullName>
        <ecNumber evidence="1">6.3.1.21</ecNumber>
    </recommendedName>
    <alternativeName>
        <fullName evidence="1">5'-phosphoribosylglycinamide transformylase 2</fullName>
    </alternativeName>
    <alternativeName>
        <fullName evidence="1">Formate-dependent GAR transformylase</fullName>
    </alternativeName>
    <alternativeName>
        <fullName evidence="1">GAR transformylase 2</fullName>
        <shortName evidence="1">GART 2</shortName>
    </alternativeName>
    <alternativeName>
        <fullName evidence="1">Non-folate glycinamide ribonucleotide transformylase</fullName>
    </alternativeName>
    <alternativeName>
        <fullName evidence="1">Phosphoribosylglycinamide formyltransferase 2</fullName>
    </alternativeName>
</protein>
<proteinExistence type="inferred from homology"/>
<dbReference type="EC" id="6.3.1.21" evidence="1"/>
<dbReference type="EMBL" id="CP001396">
    <property type="protein sequence ID" value="ACR64060.1"/>
    <property type="molecule type" value="Genomic_DNA"/>
</dbReference>
<dbReference type="RefSeq" id="WP_000173484.1">
    <property type="nucleotide sequence ID" value="NC_012759.1"/>
</dbReference>
<dbReference type="SMR" id="C4ZZK6"/>
<dbReference type="GeneID" id="93776116"/>
<dbReference type="KEGG" id="ebw:BWG_1663"/>
<dbReference type="HOGENOM" id="CLU_011534_1_3_6"/>
<dbReference type="UniPathway" id="UPA00074">
    <property type="reaction ID" value="UER00127"/>
</dbReference>
<dbReference type="GO" id="GO:0005829">
    <property type="term" value="C:cytosol"/>
    <property type="evidence" value="ECO:0007669"/>
    <property type="project" value="TreeGrafter"/>
</dbReference>
<dbReference type="GO" id="GO:0005524">
    <property type="term" value="F:ATP binding"/>
    <property type="evidence" value="ECO:0007669"/>
    <property type="project" value="UniProtKB-UniRule"/>
</dbReference>
<dbReference type="GO" id="GO:0000287">
    <property type="term" value="F:magnesium ion binding"/>
    <property type="evidence" value="ECO:0007669"/>
    <property type="project" value="InterPro"/>
</dbReference>
<dbReference type="GO" id="GO:0043815">
    <property type="term" value="F:phosphoribosylglycinamide formyltransferase 2 activity"/>
    <property type="evidence" value="ECO:0007669"/>
    <property type="project" value="UniProtKB-UniRule"/>
</dbReference>
<dbReference type="GO" id="GO:0004644">
    <property type="term" value="F:phosphoribosylglycinamide formyltransferase activity"/>
    <property type="evidence" value="ECO:0007669"/>
    <property type="project" value="InterPro"/>
</dbReference>
<dbReference type="GO" id="GO:0006189">
    <property type="term" value="P:'de novo' IMP biosynthetic process"/>
    <property type="evidence" value="ECO:0007669"/>
    <property type="project" value="UniProtKB-UniRule"/>
</dbReference>
<dbReference type="FunFam" id="3.30.1490.20:FF:000013">
    <property type="entry name" value="Formate-dependent phosphoribosylglycinamide formyltransferase"/>
    <property type="match status" value="1"/>
</dbReference>
<dbReference type="FunFam" id="3.30.470.20:FF:000027">
    <property type="entry name" value="Formate-dependent phosphoribosylglycinamide formyltransferase"/>
    <property type="match status" value="1"/>
</dbReference>
<dbReference type="FunFam" id="3.40.50.20:FF:000007">
    <property type="entry name" value="Formate-dependent phosphoribosylglycinamide formyltransferase"/>
    <property type="match status" value="1"/>
</dbReference>
<dbReference type="Gene3D" id="3.40.50.20">
    <property type="match status" value="1"/>
</dbReference>
<dbReference type="Gene3D" id="3.30.1490.20">
    <property type="entry name" value="ATP-grasp fold, A domain"/>
    <property type="match status" value="1"/>
</dbReference>
<dbReference type="Gene3D" id="3.30.470.20">
    <property type="entry name" value="ATP-grasp fold, B domain"/>
    <property type="match status" value="1"/>
</dbReference>
<dbReference type="HAMAP" id="MF_01643">
    <property type="entry name" value="PurT"/>
    <property type="match status" value="1"/>
</dbReference>
<dbReference type="InterPro" id="IPR011761">
    <property type="entry name" value="ATP-grasp"/>
</dbReference>
<dbReference type="InterPro" id="IPR003135">
    <property type="entry name" value="ATP-grasp_carboxylate-amine"/>
</dbReference>
<dbReference type="InterPro" id="IPR013815">
    <property type="entry name" value="ATP_grasp_subdomain_1"/>
</dbReference>
<dbReference type="InterPro" id="IPR016185">
    <property type="entry name" value="PreATP-grasp_dom_sf"/>
</dbReference>
<dbReference type="InterPro" id="IPR005862">
    <property type="entry name" value="PurT"/>
</dbReference>
<dbReference type="InterPro" id="IPR054350">
    <property type="entry name" value="PurT/PurK_preATP-grasp"/>
</dbReference>
<dbReference type="InterPro" id="IPR048740">
    <property type="entry name" value="PurT_C"/>
</dbReference>
<dbReference type="InterPro" id="IPR011054">
    <property type="entry name" value="Rudment_hybrid_motif"/>
</dbReference>
<dbReference type="NCBIfam" id="NF006766">
    <property type="entry name" value="PRK09288.1"/>
    <property type="match status" value="1"/>
</dbReference>
<dbReference type="NCBIfam" id="TIGR01142">
    <property type="entry name" value="purT"/>
    <property type="match status" value="1"/>
</dbReference>
<dbReference type="PANTHER" id="PTHR43055">
    <property type="entry name" value="FORMATE-DEPENDENT PHOSPHORIBOSYLGLYCINAMIDE FORMYLTRANSFERASE"/>
    <property type="match status" value="1"/>
</dbReference>
<dbReference type="PANTHER" id="PTHR43055:SF1">
    <property type="entry name" value="FORMATE-DEPENDENT PHOSPHORIBOSYLGLYCINAMIDE FORMYLTRANSFERASE"/>
    <property type="match status" value="1"/>
</dbReference>
<dbReference type="Pfam" id="PF02222">
    <property type="entry name" value="ATP-grasp"/>
    <property type="match status" value="1"/>
</dbReference>
<dbReference type="Pfam" id="PF21244">
    <property type="entry name" value="PurT_C"/>
    <property type="match status" value="1"/>
</dbReference>
<dbReference type="Pfam" id="PF22660">
    <property type="entry name" value="RS_preATP-grasp-like"/>
    <property type="match status" value="1"/>
</dbReference>
<dbReference type="SUPFAM" id="SSF56059">
    <property type="entry name" value="Glutathione synthetase ATP-binding domain-like"/>
    <property type="match status" value="1"/>
</dbReference>
<dbReference type="SUPFAM" id="SSF52440">
    <property type="entry name" value="PreATP-grasp domain"/>
    <property type="match status" value="1"/>
</dbReference>
<dbReference type="SUPFAM" id="SSF51246">
    <property type="entry name" value="Rudiment single hybrid motif"/>
    <property type="match status" value="1"/>
</dbReference>
<dbReference type="PROSITE" id="PS50975">
    <property type="entry name" value="ATP_GRASP"/>
    <property type="match status" value="1"/>
</dbReference>
<sequence length="392" mass="42434">MTLLGTALRPAATRVMLLGSGELGKEVAIECQRLGVEVIAVDRYADAPAMHVAHRSHVINMLDGDALRRVVELEKPHYIVPEIEAIATDMLIQLEEEGLNVVPCARATKLTMNREGIRRLAAEELQLPTSTYRFADSESLFREAVADIGYPCIVKPVMSSSGKGQTFIRSAEQLAQAWKYAQQGGRAGAGRVIVEGVVKFDFEITLLTVSAVDGVHFCAPVGHRQEDGDYRESWQPQQMSPLALERAQEIARKVVLALGGYGLFGVELFVCGDEVIFSEVSPRPHDTGMVTLISQDLSEFALHVRAFLGLPVGGIRQYGPAASAVILPQLTSQNVTFDNVQNAVGADLQIRLFGKPEIDGSRRLGVALATAESVVDAIERAKHAAGQVKVQG</sequence>
<reference key="1">
    <citation type="journal article" date="2009" name="J. Bacteriol.">
        <title>Genomic sequencing reveals regulatory mutations and recombinational events in the widely used MC4100 lineage of Escherichia coli K-12.</title>
        <authorList>
            <person name="Ferenci T."/>
            <person name="Zhou Z."/>
            <person name="Betteridge T."/>
            <person name="Ren Y."/>
            <person name="Liu Y."/>
            <person name="Feng L."/>
            <person name="Reeves P.R."/>
            <person name="Wang L."/>
        </authorList>
    </citation>
    <scope>NUCLEOTIDE SEQUENCE [LARGE SCALE GENOMIC DNA]</scope>
    <source>
        <strain>K12 / MC4100 / BW2952</strain>
    </source>
</reference>